<keyword id="KW-0378">Hydrolase</keyword>
<keyword id="KW-0479">Metal-binding</keyword>
<keyword id="KW-0862">Zinc</keyword>
<dbReference type="EC" id="3.1.2.6" evidence="1"/>
<dbReference type="EMBL" id="CP000803">
    <property type="protein sequence ID" value="ABU61169.1"/>
    <property type="molecule type" value="Genomic_DNA"/>
</dbReference>
<dbReference type="RefSeq" id="WP_003015071.1">
    <property type="nucleotide sequence ID" value="NC_009749.1"/>
</dbReference>
<dbReference type="SMR" id="A7NB16"/>
<dbReference type="KEGG" id="fta:FTA_0693"/>
<dbReference type="HOGENOM" id="CLU_030571_4_1_6"/>
<dbReference type="UniPathway" id="UPA00619">
    <property type="reaction ID" value="UER00676"/>
</dbReference>
<dbReference type="GO" id="GO:0004416">
    <property type="term" value="F:hydroxyacylglutathione hydrolase activity"/>
    <property type="evidence" value="ECO:0007669"/>
    <property type="project" value="UniProtKB-UniRule"/>
</dbReference>
<dbReference type="GO" id="GO:0046872">
    <property type="term" value="F:metal ion binding"/>
    <property type="evidence" value="ECO:0007669"/>
    <property type="project" value="UniProtKB-KW"/>
</dbReference>
<dbReference type="GO" id="GO:0019243">
    <property type="term" value="P:methylglyoxal catabolic process to D-lactate via S-lactoyl-glutathione"/>
    <property type="evidence" value="ECO:0007669"/>
    <property type="project" value="InterPro"/>
</dbReference>
<dbReference type="CDD" id="cd07723">
    <property type="entry name" value="hydroxyacylglutathione_hydrolase_MBL-fold"/>
    <property type="match status" value="1"/>
</dbReference>
<dbReference type="Gene3D" id="3.60.15.10">
    <property type="entry name" value="Ribonuclease Z/Hydroxyacylglutathione hydrolase-like"/>
    <property type="match status" value="1"/>
</dbReference>
<dbReference type="HAMAP" id="MF_01374">
    <property type="entry name" value="Glyoxalase_2"/>
    <property type="match status" value="1"/>
</dbReference>
<dbReference type="InterPro" id="IPR035680">
    <property type="entry name" value="Clx_II_MBL"/>
</dbReference>
<dbReference type="InterPro" id="IPR050110">
    <property type="entry name" value="Glyoxalase_II_hydrolase"/>
</dbReference>
<dbReference type="InterPro" id="IPR032282">
    <property type="entry name" value="HAGH_C"/>
</dbReference>
<dbReference type="InterPro" id="IPR017782">
    <property type="entry name" value="Hydroxyacylglutathione_Hdrlase"/>
</dbReference>
<dbReference type="InterPro" id="IPR001279">
    <property type="entry name" value="Metallo-B-lactamas"/>
</dbReference>
<dbReference type="InterPro" id="IPR036866">
    <property type="entry name" value="RibonucZ/Hydroxyglut_hydro"/>
</dbReference>
<dbReference type="PANTHER" id="PTHR43705">
    <property type="entry name" value="HYDROXYACYLGLUTATHIONE HYDROLASE"/>
    <property type="match status" value="1"/>
</dbReference>
<dbReference type="PANTHER" id="PTHR43705:SF1">
    <property type="entry name" value="HYDROXYACYLGLUTATHIONE HYDROLASE GLOB"/>
    <property type="match status" value="1"/>
</dbReference>
<dbReference type="Pfam" id="PF16123">
    <property type="entry name" value="HAGH_C"/>
    <property type="match status" value="1"/>
</dbReference>
<dbReference type="Pfam" id="PF00753">
    <property type="entry name" value="Lactamase_B"/>
    <property type="match status" value="1"/>
</dbReference>
<dbReference type="SMART" id="SM00849">
    <property type="entry name" value="Lactamase_B"/>
    <property type="match status" value="1"/>
</dbReference>
<dbReference type="SUPFAM" id="SSF56281">
    <property type="entry name" value="Metallo-hydrolase/oxidoreductase"/>
    <property type="match status" value="1"/>
</dbReference>
<sequence>MQIKRWFLNNSLRNYQYLLYDKSHAIVIDPLKSDIFAEFIAKNKLQLEAILITHKHGDHIAGVKKLLAIYPNAKVYAYTGNDLFKPDIYVKDGSFINLGFTSFRVMYIPGHIDDHVCFLFEQERALFCGDTLFNAGVGGVQAESADINQLYDSLVKITKLDGDIKPYPAHDYWLGNLDFALSILADDSYFNYYRNQVAELAAEDKPIVNLAEEAKLNIFIRAMSDKALLKALPDYSLGREMFVKLRQLKNNF</sequence>
<name>GLO2_FRATF</name>
<gene>
    <name evidence="1" type="primary">gloB</name>
    <name type="ordered locus">FTA_0693</name>
</gene>
<organism>
    <name type="scientific">Francisella tularensis subsp. holarctica (strain FTNF002-00 / FTA)</name>
    <dbReference type="NCBI Taxonomy" id="458234"/>
    <lineage>
        <taxon>Bacteria</taxon>
        <taxon>Pseudomonadati</taxon>
        <taxon>Pseudomonadota</taxon>
        <taxon>Gammaproteobacteria</taxon>
        <taxon>Thiotrichales</taxon>
        <taxon>Francisellaceae</taxon>
        <taxon>Francisella</taxon>
    </lineage>
</organism>
<feature type="chain" id="PRO_1000068217" description="Hydroxyacylglutathione hydrolase">
    <location>
        <begin position="1"/>
        <end position="252"/>
    </location>
</feature>
<feature type="binding site" evidence="1">
    <location>
        <position position="54"/>
    </location>
    <ligand>
        <name>Zn(2+)</name>
        <dbReference type="ChEBI" id="CHEBI:29105"/>
        <label>1</label>
    </ligand>
</feature>
<feature type="binding site" evidence="1">
    <location>
        <position position="56"/>
    </location>
    <ligand>
        <name>Zn(2+)</name>
        <dbReference type="ChEBI" id="CHEBI:29105"/>
        <label>1</label>
    </ligand>
</feature>
<feature type="binding site" evidence="1">
    <location>
        <position position="58"/>
    </location>
    <ligand>
        <name>Zn(2+)</name>
        <dbReference type="ChEBI" id="CHEBI:29105"/>
        <label>2</label>
    </ligand>
</feature>
<feature type="binding site" evidence="1">
    <location>
        <position position="59"/>
    </location>
    <ligand>
        <name>Zn(2+)</name>
        <dbReference type="ChEBI" id="CHEBI:29105"/>
        <label>2</label>
    </ligand>
</feature>
<feature type="binding site" evidence="1">
    <location>
        <position position="111"/>
    </location>
    <ligand>
        <name>Zn(2+)</name>
        <dbReference type="ChEBI" id="CHEBI:29105"/>
        <label>1</label>
    </ligand>
</feature>
<feature type="binding site" evidence="1">
    <location>
        <position position="130"/>
    </location>
    <ligand>
        <name>Zn(2+)</name>
        <dbReference type="ChEBI" id="CHEBI:29105"/>
        <label>1</label>
    </ligand>
</feature>
<feature type="binding site" evidence="1">
    <location>
        <position position="130"/>
    </location>
    <ligand>
        <name>Zn(2+)</name>
        <dbReference type="ChEBI" id="CHEBI:29105"/>
        <label>2</label>
    </ligand>
</feature>
<feature type="binding site" evidence="1">
    <location>
        <position position="170"/>
    </location>
    <ligand>
        <name>Zn(2+)</name>
        <dbReference type="ChEBI" id="CHEBI:29105"/>
        <label>2</label>
    </ligand>
</feature>
<comment type="function">
    <text evidence="1">Thiolesterase that catalyzes the hydrolysis of S-D-lactoyl-glutathione to form glutathione and D-lactic acid.</text>
</comment>
<comment type="catalytic activity">
    <reaction evidence="1">
        <text>an S-(2-hydroxyacyl)glutathione + H2O = a 2-hydroxy carboxylate + glutathione + H(+)</text>
        <dbReference type="Rhea" id="RHEA:21864"/>
        <dbReference type="ChEBI" id="CHEBI:15377"/>
        <dbReference type="ChEBI" id="CHEBI:15378"/>
        <dbReference type="ChEBI" id="CHEBI:57925"/>
        <dbReference type="ChEBI" id="CHEBI:58896"/>
        <dbReference type="ChEBI" id="CHEBI:71261"/>
        <dbReference type="EC" id="3.1.2.6"/>
    </reaction>
</comment>
<comment type="cofactor">
    <cofactor evidence="1">
        <name>Zn(2+)</name>
        <dbReference type="ChEBI" id="CHEBI:29105"/>
    </cofactor>
    <text evidence="1">Binds 2 Zn(2+) ions per subunit.</text>
</comment>
<comment type="pathway">
    <text evidence="1">Secondary metabolite metabolism; methylglyoxal degradation; (R)-lactate from methylglyoxal: step 2/2.</text>
</comment>
<comment type="subunit">
    <text evidence="1">Monomer.</text>
</comment>
<comment type="similarity">
    <text evidence="1">Belongs to the metallo-beta-lactamase superfamily. Glyoxalase II family.</text>
</comment>
<proteinExistence type="inferred from homology"/>
<protein>
    <recommendedName>
        <fullName evidence="1">Hydroxyacylglutathione hydrolase</fullName>
        <ecNumber evidence="1">3.1.2.6</ecNumber>
    </recommendedName>
    <alternativeName>
        <fullName evidence="1">Glyoxalase II</fullName>
        <shortName evidence="1">Glx II</shortName>
    </alternativeName>
</protein>
<evidence type="ECO:0000255" key="1">
    <source>
        <dbReference type="HAMAP-Rule" id="MF_01374"/>
    </source>
</evidence>
<accession>A7NB16</accession>
<reference key="1">
    <citation type="journal article" date="2009" name="PLoS ONE">
        <title>Complete genome sequence of Francisella tularensis subspecies holarctica FTNF002-00.</title>
        <authorList>
            <person name="Barabote R.D."/>
            <person name="Xie G."/>
            <person name="Brettin T.S."/>
            <person name="Hinrichs S.H."/>
            <person name="Fey P.D."/>
            <person name="Jay J.J."/>
            <person name="Engle J.L."/>
            <person name="Godbole S.D."/>
            <person name="Noronha J.M."/>
            <person name="Scheuermann R.H."/>
            <person name="Zhou L.W."/>
            <person name="Lion C."/>
            <person name="Dempsey M.P."/>
        </authorList>
    </citation>
    <scope>NUCLEOTIDE SEQUENCE [LARGE SCALE GENOMIC DNA]</scope>
    <source>
        <strain>FTNF002-00 / FTA</strain>
    </source>
</reference>